<proteinExistence type="evidence at transcript level"/>
<keyword id="KW-0106">Calcium</keyword>
<keyword id="KW-0407">Ion channel</keyword>
<keyword id="KW-0406">Ion transport</keyword>
<keyword id="KW-0472">Membrane</keyword>
<keyword id="KW-0479">Metal-binding</keyword>
<keyword id="KW-0630">Potassium</keyword>
<keyword id="KW-0631">Potassium channel</keyword>
<keyword id="KW-0633">Potassium transport</keyword>
<keyword id="KW-1185">Reference proteome</keyword>
<keyword id="KW-0677">Repeat</keyword>
<keyword id="KW-0812">Transmembrane</keyword>
<keyword id="KW-1133">Transmembrane helix</keyword>
<keyword id="KW-0813">Transport</keyword>
<keyword id="KW-0926">Vacuole</keyword>
<organism>
    <name type="scientific">Arabidopsis thaliana</name>
    <name type="common">Mouse-ear cress</name>
    <dbReference type="NCBI Taxonomy" id="3702"/>
    <lineage>
        <taxon>Eukaryota</taxon>
        <taxon>Viridiplantae</taxon>
        <taxon>Streptophyta</taxon>
        <taxon>Embryophyta</taxon>
        <taxon>Tracheophyta</taxon>
        <taxon>Spermatophyta</taxon>
        <taxon>Magnoliopsida</taxon>
        <taxon>eudicotyledons</taxon>
        <taxon>Gunneridae</taxon>
        <taxon>Pentapetalae</taxon>
        <taxon>rosids</taxon>
        <taxon>malvids</taxon>
        <taxon>Brassicales</taxon>
        <taxon>Brassicaceae</taxon>
        <taxon>Camelineae</taxon>
        <taxon>Arabidopsis</taxon>
    </lineage>
</organism>
<accession>Q9FL25</accession>
<accession>Q1PDM4</accession>
<accession>Q9SCY7</accession>
<sequence length="443" mass="49326">MANDGNGDNNDDPLRQYLMNPRINPPPPSLLTLPENNDVTIPMPITPLELKNRLIFGSFVRSRKESSLPIDALSQNPSTSSSATTSFSDSTDLLLPLTEPNKPVRKSKPTINFHRSKTAPAMAAINNISHPNDPKTDQQSDSKTIVNQAVALLVVYLSLGVLIYWLNRDSYNVKQTHPVVDALYFCIVTMCTIGYGDITPDSVVTKLFSIFFVLVGFGFMDILLSGMVTYVLDLQENYMLETARNESLNLNDRDKVRSYIIDVKKGRMRIRLKVGLALGVVVLCLGFGVLIMHFVEKIGWLDSFYFSVMSVTTVGYGDRAFNTLAGRLLAAMWLLVSTLAVARAILFLAESRVDKRNRERAKKVLGESMSISQFLDADIDCNGCVSKAEFVIYKLKKMDKITEKDINPIGFQFDKLDRTNSGRITLLDLLESSTKDLPTATSI</sequence>
<comment type="function">
    <text>Probable voltage-independent potassium-selective tonoplast ion channel.</text>
</comment>
<comment type="subunit">
    <text evidence="6">Homodimer.</text>
</comment>
<comment type="subcellular location">
    <subcellularLocation>
        <location evidence="4 5">Vacuole membrane</location>
        <topology evidence="4 5">Multi-pass membrane protein</topology>
    </subcellularLocation>
</comment>
<comment type="tissue specificity">
    <text evidence="4">Expressed in roots, stems, leaves and flowers.</text>
</comment>
<comment type="domain">
    <text>Each of the two pore-forming region (also called P-domain or P-loop) is enclosed by two transmembrane segments (2P/4TM) and contains the GYGD signature motif which seems to be involved in potassium selectivity.</text>
</comment>
<comment type="similarity">
    <text evidence="6">Belongs to the two pore domain potassium channel (TC 1.A.1.7) family.</text>
</comment>
<evidence type="ECO:0000255" key="1"/>
<evidence type="ECO:0000255" key="2">
    <source>
        <dbReference type="PROSITE-ProRule" id="PRU10142"/>
    </source>
</evidence>
<evidence type="ECO:0000256" key="3">
    <source>
        <dbReference type="SAM" id="MobiDB-lite"/>
    </source>
</evidence>
<evidence type="ECO:0000269" key="4">
    <source>
    </source>
</evidence>
<evidence type="ECO:0000269" key="5">
    <source>
    </source>
</evidence>
<evidence type="ECO:0000305" key="6"/>
<protein>
    <recommendedName>
        <fullName>Two-pore potassium channel 2</fullName>
        <shortName>AtTPK2</shortName>
    </recommendedName>
    <alternativeName>
        <fullName>Calcium-activated outward-rectifying potassium channel 2</fullName>
        <shortName>AtKCO2</shortName>
    </alternativeName>
</protein>
<dbReference type="EMBL" id="AJ131641">
    <property type="protein sequence ID" value="CAB64717.1"/>
    <property type="molecule type" value="mRNA"/>
</dbReference>
<dbReference type="EMBL" id="AB010698">
    <property type="protein sequence ID" value="BAB11092.1"/>
    <property type="molecule type" value="Genomic_DNA"/>
</dbReference>
<dbReference type="EMBL" id="CP002688">
    <property type="protein sequence ID" value="AED95375.1"/>
    <property type="molecule type" value="Genomic_DNA"/>
</dbReference>
<dbReference type="EMBL" id="DQ447044">
    <property type="protein sequence ID" value="ABE66226.1"/>
    <property type="molecule type" value="mRNA"/>
</dbReference>
<dbReference type="RefSeq" id="NP_199449.1">
    <property type="nucleotide sequence ID" value="NM_124007.3"/>
</dbReference>
<dbReference type="SMR" id="Q9FL25"/>
<dbReference type="BioGRID" id="19929">
    <property type="interactions" value="1"/>
</dbReference>
<dbReference type="FunCoup" id="Q9FL25">
    <property type="interactions" value="15"/>
</dbReference>
<dbReference type="STRING" id="3702.Q9FL25"/>
<dbReference type="PaxDb" id="3702-AT5G46370.1"/>
<dbReference type="EnsemblPlants" id="AT5G46370.1">
    <property type="protein sequence ID" value="AT5G46370.1"/>
    <property type="gene ID" value="AT5G46370"/>
</dbReference>
<dbReference type="GeneID" id="834680"/>
<dbReference type="Gramene" id="AT5G46370.1">
    <property type="protein sequence ID" value="AT5G46370.1"/>
    <property type="gene ID" value="AT5G46370"/>
</dbReference>
<dbReference type="KEGG" id="ath:AT5G46370"/>
<dbReference type="Araport" id="AT5G46370"/>
<dbReference type="TAIR" id="AT5G46370">
    <property type="gene designation" value="KCO2"/>
</dbReference>
<dbReference type="eggNOG" id="KOG1418">
    <property type="taxonomic scope" value="Eukaryota"/>
</dbReference>
<dbReference type="HOGENOM" id="CLU_033675_2_0_1"/>
<dbReference type="InParanoid" id="Q9FL25"/>
<dbReference type="OMA" id="NDLTHPF"/>
<dbReference type="OrthoDB" id="415460at2759"/>
<dbReference type="PhylomeDB" id="Q9FL25"/>
<dbReference type="PRO" id="PR:Q9FL25"/>
<dbReference type="Proteomes" id="UP000006548">
    <property type="component" value="Chromosome 5"/>
</dbReference>
<dbReference type="ExpressionAtlas" id="Q9FL25">
    <property type="expression patterns" value="baseline and differential"/>
</dbReference>
<dbReference type="GO" id="GO:0009705">
    <property type="term" value="C:plant-type vacuole membrane"/>
    <property type="evidence" value="ECO:0000314"/>
    <property type="project" value="UniProtKB"/>
</dbReference>
<dbReference type="GO" id="GO:0046872">
    <property type="term" value="F:metal ion binding"/>
    <property type="evidence" value="ECO:0007669"/>
    <property type="project" value="UniProtKB-KW"/>
</dbReference>
<dbReference type="GO" id="GO:0005267">
    <property type="term" value="F:potassium channel activity"/>
    <property type="evidence" value="ECO:0007669"/>
    <property type="project" value="UniProtKB-KW"/>
</dbReference>
<dbReference type="FunFam" id="1.10.287.70:FF:000102">
    <property type="entry name" value="Two-pore potassium channel 3"/>
    <property type="match status" value="1"/>
</dbReference>
<dbReference type="FunFam" id="1.10.287.70:FF:000165">
    <property type="entry name" value="Two-pore potassium channel 5"/>
    <property type="match status" value="1"/>
</dbReference>
<dbReference type="Gene3D" id="1.10.287.70">
    <property type="match status" value="2"/>
</dbReference>
<dbReference type="InterPro" id="IPR003280">
    <property type="entry name" value="2pore_dom_K_chnl"/>
</dbReference>
<dbReference type="InterPro" id="IPR011992">
    <property type="entry name" value="EF-hand-dom_pair"/>
</dbReference>
<dbReference type="InterPro" id="IPR018247">
    <property type="entry name" value="EF_Hand_1_Ca_BS"/>
</dbReference>
<dbReference type="InterPro" id="IPR013099">
    <property type="entry name" value="K_chnl_dom"/>
</dbReference>
<dbReference type="PANTHER" id="PTHR11003">
    <property type="entry name" value="POTASSIUM CHANNEL, SUBFAMILY K"/>
    <property type="match status" value="1"/>
</dbReference>
<dbReference type="PANTHER" id="PTHR11003:SF274">
    <property type="entry name" value="POTASSIUM INWARD RECTIFIER (KIR)-LIKE CHANNEL 3-RELATED"/>
    <property type="match status" value="1"/>
</dbReference>
<dbReference type="Pfam" id="PF07885">
    <property type="entry name" value="Ion_trans_2"/>
    <property type="match status" value="2"/>
</dbReference>
<dbReference type="PRINTS" id="PR01333">
    <property type="entry name" value="2POREKCHANEL"/>
</dbReference>
<dbReference type="SUPFAM" id="SSF47473">
    <property type="entry name" value="EF-hand"/>
    <property type="match status" value="1"/>
</dbReference>
<dbReference type="SUPFAM" id="SSF81324">
    <property type="entry name" value="Voltage-gated potassium channels"/>
    <property type="match status" value="2"/>
</dbReference>
<dbReference type="PROSITE" id="PS00018">
    <property type="entry name" value="EF_HAND_1"/>
    <property type="match status" value="1"/>
</dbReference>
<feature type="chain" id="PRO_0000101776" description="Two-pore potassium channel 2">
    <location>
        <begin position="1"/>
        <end position="443"/>
    </location>
</feature>
<feature type="topological domain" description="Cytoplasmic" evidence="1">
    <location>
        <begin position="1"/>
        <end position="144"/>
    </location>
</feature>
<feature type="transmembrane region" description="Helical" evidence="1">
    <location>
        <begin position="145"/>
        <end position="165"/>
    </location>
</feature>
<feature type="intramembrane region" description="Pore-forming; Name=Pore-forming 1" evidence="1">
    <location>
        <begin position="181"/>
        <end position="200"/>
    </location>
</feature>
<feature type="transmembrane region" description="Helical" evidence="1">
    <location>
        <begin position="208"/>
        <end position="228"/>
    </location>
</feature>
<feature type="topological domain" description="Cytoplasmic" evidence="1">
    <location>
        <begin position="229"/>
        <end position="274"/>
    </location>
</feature>
<feature type="transmembrane region" description="Helical" evidence="1">
    <location>
        <begin position="275"/>
        <end position="295"/>
    </location>
</feature>
<feature type="intramembrane region" description="Pore-forming; Name=Pore-forming 2" evidence="1">
    <location>
        <begin position="302"/>
        <end position="321"/>
    </location>
</feature>
<feature type="transmembrane region" description="Helical" evidence="1">
    <location>
        <begin position="328"/>
        <end position="348"/>
    </location>
</feature>
<feature type="topological domain" description="Cytoplasmic" evidence="1">
    <location>
        <begin position="349"/>
        <end position="443"/>
    </location>
</feature>
<feature type="domain" description="EF-hand 1">
    <location>
        <begin position="365"/>
        <end position="400"/>
    </location>
</feature>
<feature type="domain" description="EF-hand 2">
    <location>
        <begin position="404"/>
        <end position="439"/>
    </location>
</feature>
<feature type="region of interest" description="Disordered" evidence="3">
    <location>
        <begin position="67"/>
        <end position="109"/>
    </location>
</feature>
<feature type="compositionally biased region" description="Low complexity" evidence="3">
    <location>
        <begin position="72"/>
        <end position="98"/>
    </location>
</feature>
<feature type="binding site" evidence="2">
    <location>
        <position position="378"/>
    </location>
    <ligand>
        <name>Ca(2+)</name>
        <dbReference type="ChEBI" id="CHEBI:29108"/>
        <label>1</label>
    </ligand>
</feature>
<feature type="binding site" evidence="2">
    <location>
        <position position="380"/>
    </location>
    <ligand>
        <name>Ca(2+)</name>
        <dbReference type="ChEBI" id="CHEBI:29108"/>
        <label>1</label>
    </ligand>
</feature>
<feature type="binding site" evidence="2">
    <location>
        <position position="382"/>
    </location>
    <ligand>
        <name>Ca(2+)</name>
        <dbReference type="ChEBI" id="CHEBI:29108"/>
        <label>1</label>
    </ligand>
</feature>
<feature type="binding site" evidence="2">
    <location>
        <position position="384"/>
    </location>
    <ligand>
        <name>Ca(2+)</name>
        <dbReference type="ChEBI" id="CHEBI:29108"/>
        <label>1</label>
    </ligand>
</feature>
<feature type="binding site" evidence="2">
    <location>
        <position position="389"/>
    </location>
    <ligand>
        <name>Ca(2+)</name>
        <dbReference type="ChEBI" id="CHEBI:29108"/>
        <label>1</label>
    </ligand>
</feature>
<feature type="binding site" evidence="6">
    <location>
        <position position="417"/>
    </location>
    <ligand>
        <name>Ca(2+)</name>
        <dbReference type="ChEBI" id="CHEBI:29108"/>
        <label>2</label>
    </ligand>
</feature>
<feature type="binding site" evidence="6">
    <location>
        <position position="421"/>
    </location>
    <ligand>
        <name>Ca(2+)</name>
        <dbReference type="ChEBI" id="CHEBI:29108"/>
        <label>2</label>
    </ligand>
</feature>
<feature type="binding site" evidence="6">
    <location>
        <position position="423"/>
    </location>
    <ligand>
        <name>Ca(2+)</name>
        <dbReference type="ChEBI" id="CHEBI:29108"/>
        <label>2</label>
    </ligand>
</feature>
<feature type="binding site" evidence="6">
    <location>
        <position position="428"/>
    </location>
    <ligand>
        <name>Ca(2+)</name>
        <dbReference type="ChEBI" id="CHEBI:29108"/>
        <label>2</label>
    </ligand>
</feature>
<feature type="sequence conflict" description="In Ref. 1; CAB64717." evidence="6" ref="1">
    <original>Y</original>
    <variation>H</variation>
    <location>
        <position position="393"/>
    </location>
</feature>
<gene>
    <name type="primary">TPK2</name>
    <name type="synonym">KCO2</name>
    <name type="ordered locus">At5g46370</name>
    <name type="ORF">MPL12.17</name>
</gene>
<name>KCO2_ARATH</name>
<reference key="1">
    <citation type="submission" date="1998-12" db="EMBL/GenBank/DDBJ databases">
        <title>KCO2, a new member of the two-pore K+ channel family in plants.</title>
        <authorList>
            <person name="Czempinski K."/>
            <person name="Wiese S."/>
            <person name="Zimmermann S."/>
            <person name="Mueller-Roeber B."/>
        </authorList>
    </citation>
    <scope>NUCLEOTIDE SEQUENCE [MRNA]</scope>
    <source>
        <strain>cv. C24</strain>
    </source>
</reference>
<reference key="2">
    <citation type="journal article" date="1998" name="DNA Res.">
        <title>Structural analysis of Arabidopsis thaliana chromosome 5. V. Sequence features of the regions of 1,381,565 bp covered by twenty one physically assigned P1 and TAC clones.</title>
        <authorList>
            <person name="Kaneko T."/>
            <person name="Kotani H."/>
            <person name="Nakamura Y."/>
            <person name="Sato S."/>
            <person name="Asamizu E."/>
            <person name="Miyajima N."/>
            <person name="Tabata S."/>
        </authorList>
    </citation>
    <scope>NUCLEOTIDE SEQUENCE [LARGE SCALE GENOMIC DNA]</scope>
    <source>
        <strain>cv. Columbia</strain>
    </source>
</reference>
<reference key="3">
    <citation type="journal article" date="2017" name="Plant J.">
        <title>Araport11: a complete reannotation of the Arabidopsis thaliana reference genome.</title>
        <authorList>
            <person name="Cheng C.Y."/>
            <person name="Krishnakumar V."/>
            <person name="Chan A.P."/>
            <person name="Thibaud-Nissen F."/>
            <person name="Schobel S."/>
            <person name="Town C.D."/>
        </authorList>
    </citation>
    <scope>GENOME REANNOTATION</scope>
    <source>
        <strain>cv. Columbia</strain>
    </source>
</reference>
<reference key="4">
    <citation type="journal article" date="2006" name="Plant Biotechnol. J.">
        <title>Simultaneous high-throughput recombinational cloning of open reading frames in closed and open configurations.</title>
        <authorList>
            <person name="Underwood B.A."/>
            <person name="Vanderhaeghen R."/>
            <person name="Whitford R."/>
            <person name="Town C.D."/>
            <person name="Hilson P."/>
        </authorList>
    </citation>
    <scope>NUCLEOTIDE SEQUENCE [LARGE SCALE MRNA]</scope>
    <source>
        <strain>cv. Columbia</strain>
    </source>
</reference>
<reference key="5">
    <citation type="journal article" date="2001" name="Plant Physiol.">
        <title>Phylogenetic relationships within cation transporter families of Arabidopsis.</title>
        <authorList>
            <person name="Maeser P."/>
            <person name="Thomine S."/>
            <person name="Schroeder J.I."/>
            <person name="Ward J.M."/>
            <person name="Hirschi K."/>
            <person name="Sze H."/>
            <person name="Talke I.N."/>
            <person name="Amtmann A."/>
            <person name="Maathuis F.J.M."/>
            <person name="Sanders D."/>
            <person name="Harper J.F."/>
            <person name="Tchieu J."/>
            <person name="Gribskov M."/>
            <person name="Persans M.W."/>
            <person name="Salt D.E."/>
            <person name="Kim S.A."/>
            <person name="Guerinot M.L."/>
        </authorList>
    </citation>
    <scope>GENE FAMILY</scope>
    <scope>NOMENCLATURE</scope>
</reference>
<reference key="6">
    <citation type="journal article" date="2004" name="Proc. Natl. Acad. Sci. U.S.A.">
        <title>AtTPK4, an Arabidopsis tandem-pore K+ channel, poised to control the pollen membrane voltage in a pH- and Ca2+-dependent manner.</title>
        <authorList>
            <person name="Becker D."/>
            <person name="Geiger D."/>
            <person name="Dunkel M."/>
            <person name="Roller A."/>
            <person name="Bertl A."/>
            <person name="Latz A."/>
            <person name="Carpaneto A."/>
            <person name="Dietrich P."/>
            <person name="Roelfsema M.R."/>
            <person name="Voelker C."/>
            <person name="Schmidt D."/>
            <person name="Mueller-Roeber B."/>
            <person name="Czempinski K."/>
            <person name="Hedrich R."/>
        </authorList>
    </citation>
    <scope>GENE FAMILY</scope>
    <scope>NOMENCLATURE</scope>
</reference>
<reference key="7">
    <citation type="journal article" date="2006" name="Plant J.">
        <title>Members of the Arabidopsis AtTPK/KCO family form homomeric vacuolar channels in planta.</title>
        <authorList>
            <person name="Voelker C."/>
            <person name="Schmidt D."/>
            <person name="Mueller-Roeber B."/>
            <person name="Czempinski K."/>
        </authorList>
    </citation>
    <scope>TISSUE SPECIFICITY</scope>
    <scope>SUBCELLULAR LOCATION</scope>
</reference>
<reference key="8">
    <citation type="journal article" date="2007" name="Plant J.">
        <title>TPK1, a Ca(2+)-regulated Arabidopsis vacuole two-pore K(+) channel is activated by 14-3-3 proteins.</title>
        <authorList>
            <person name="Latz A."/>
            <person name="Becker D."/>
            <person name="Hekman M."/>
            <person name="Mueller T."/>
            <person name="Beyhl D."/>
            <person name="Marten I."/>
            <person name="Eing C."/>
            <person name="Fischer A."/>
            <person name="Dunkel M."/>
            <person name="Bertl A."/>
            <person name="Rapp U.R."/>
            <person name="Hedrich R."/>
        </authorList>
    </citation>
    <scope>SUBCELLULAR LOCATION</scope>
</reference>